<dbReference type="EMBL" id="AC002336">
    <property type="protein sequence ID" value="AAB87591.1"/>
    <property type="molecule type" value="Genomic_DNA"/>
</dbReference>
<dbReference type="EMBL" id="CP002685">
    <property type="protein sequence ID" value="AEC09832.1"/>
    <property type="molecule type" value="Genomic_DNA"/>
</dbReference>
<dbReference type="PIR" id="F84829">
    <property type="entry name" value="F84829"/>
</dbReference>
<dbReference type="RefSeq" id="NP_181577.1">
    <property type="nucleotide sequence ID" value="NM_129606.2"/>
</dbReference>
<dbReference type="SMR" id="O22890"/>
<dbReference type="BioGRID" id="3977">
    <property type="interactions" value="2"/>
</dbReference>
<dbReference type="FunCoup" id="O22890">
    <property type="interactions" value="112"/>
</dbReference>
<dbReference type="IntAct" id="O22890">
    <property type="interactions" value="2"/>
</dbReference>
<dbReference type="STRING" id="3702.O22890"/>
<dbReference type="PaxDb" id="3702-AT2G40450.1"/>
<dbReference type="ProteomicsDB" id="232392"/>
<dbReference type="EnsemblPlants" id="AT2G40450.1">
    <property type="protein sequence ID" value="AT2G40450.1"/>
    <property type="gene ID" value="AT2G40450"/>
</dbReference>
<dbReference type="GeneID" id="818639"/>
<dbReference type="Gramene" id="AT2G40450.1">
    <property type="protein sequence ID" value="AT2G40450.1"/>
    <property type="gene ID" value="AT2G40450"/>
</dbReference>
<dbReference type="KEGG" id="ath:AT2G40450"/>
<dbReference type="Araport" id="AT2G40450"/>
<dbReference type="TAIR" id="AT2G40450"/>
<dbReference type="eggNOG" id="KOG1987">
    <property type="taxonomic scope" value="Eukaryota"/>
</dbReference>
<dbReference type="HOGENOM" id="CLU_004253_9_1_1"/>
<dbReference type="InParanoid" id="O22890"/>
<dbReference type="OMA" id="HVYALCV"/>
<dbReference type="PhylomeDB" id="O22890"/>
<dbReference type="UniPathway" id="UPA00143"/>
<dbReference type="PRO" id="PR:O22890"/>
<dbReference type="Proteomes" id="UP000006548">
    <property type="component" value="Chromosome 2"/>
</dbReference>
<dbReference type="ExpressionAtlas" id="O22890">
    <property type="expression patterns" value="baseline and differential"/>
</dbReference>
<dbReference type="GO" id="GO:0016567">
    <property type="term" value="P:protein ubiquitination"/>
    <property type="evidence" value="ECO:0007669"/>
    <property type="project" value="UniProtKB-UniPathway"/>
</dbReference>
<dbReference type="CDD" id="cd18186">
    <property type="entry name" value="BTB_POZ_ZBTB_KLHL-like"/>
    <property type="match status" value="1"/>
</dbReference>
<dbReference type="Gene3D" id="1.25.40.420">
    <property type="match status" value="1"/>
</dbReference>
<dbReference type="Gene3D" id="3.30.710.10">
    <property type="entry name" value="Potassium Channel Kv1.1, Chain A"/>
    <property type="match status" value="1"/>
</dbReference>
<dbReference type="InterPro" id="IPR044784">
    <property type="entry name" value="At1g01640-like"/>
</dbReference>
<dbReference type="InterPro" id="IPR000210">
    <property type="entry name" value="BTB/POZ_dom"/>
</dbReference>
<dbReference type="InterPro" id="IPR011333">
    <property type="entry name" value="SKP1/BTB/POZ_sf"/>
</dbReference>
<dbReference type="PANTHER" id="PTHR47274:SF3">
    <property type="entry name" value="BTB DOMAIN-CONTAINING PROTEIN"/>
    <property type="match status" value="1"/>
</dbReference>
<dbReference type="PANTHER" id="PTHR47274">
    <property type="entry name" value="BTB/POZ DOMAIN CONTAINING PROTEIN, EXPRESSED-RELATED"/>
    <property type="match status" value="1"/>
</dbReference>
<dbReference type="Pfam" id="PF00651">
    <property type="entry name" value="BTB"/>
    <property type="match status" value="1"/>
</dbReference>
<dbReference type="SMART" id="SM00225">
    <property type="entry name" value="BTB"/>
    <property type="match status" value="1"/>
</dbReference>
<dbReference type="SUPFAM" id="SSF54695">
    <property type="entry name" value="POZ domain"/>
    <property type="match status" value="1"/>
</dbReference>
<dbReference type="PROSITE" id="PS50097">
    <property type="entry name" value="BTB"/>
    <property type="match status" value="1"/>
</dbReference>
<sequence>MATQSNKEAFLGGFKKLLNEQWQADVRLKAGDSDETTSIFAHKLVLVARSEVFKKILESDEFKASSKQMETVTLSEMKHEELEAFVEFIYRVDGSICSASLKKHARSLFHAADKYEIPHLRDLCRNELISSLNSSNALSILELAQIPFDKALNDPAFTTIITNISTIASGDEFKLFVANHPNLAVDIMKASITRLSTSRKICGYCNRYY</sequence>
<organism>
    <name type="scientific">Arabidopsis thaliana</name>
    <name type="common">Mouse-ear cress</name>
    <dbReference type="NCBI Taxonomy" id="3702"/>
    <lineage>
        <taxon>Eukaryota</taxon>
        <taxon>Viridiplantae</taxon>
        <taxon>Streptophyta</taxon>
        <taxon>Embryophyta</taxon>
        <taxon>Tracheophyta</taxon>
        <taxon>Spermatophyta</taxon>
        <taxon>Magnoliopsida</taxon>
        <taxon>eudicotyledons</taxon>
        <taxon>Gunneridae</taxon>
        <taxon>Pentapetalae</taxon>
        <taxon>rosids</taxon>
        <taxon>malvids</taxon>
        <taxon>Brassicales</taxon>
        <taxon>Brassicaceae</taxon>
        <taxon>Camelineae</taxon>
        <taxon>Arabidopsis</taxon>
    </lineage>
</organism>
<feature type="chain" id="PRO_0000405999" description="Putative BTB/POZ domain-containing protein At2g40450">
    <location>
        <begin position="1"/>
        <end position="209"/>
    </location>
</feature>
<feature type="domain" description="BTB" evidence="2">
    <location>
        <begin position="24"/>
        <end position="98"/>
    </location>
</feature>
<keyword id="KW-1185">Reference proteome</keyword>
<keyword id="KW-0833">Ubl conjugation pathway</keyword>
<proteinExistence type="inferred from homology"/>
<gene>
    <name type="ordered locus">At2g40450</name>
    <name type="ORF">T2P4.20</name>
    <name type="ORF">T3G21</name>
</gene>
<name>Y2045_ARATH</name>
<comment type="function">
    <text evidence="1">May act as a substrate-specific adapter of an E3 ubiquitin-protein ligase complex (CUL3-RBX1-BTB) which mediates the ubiquitination and subsequent proteasomal degradation of target proteins.</text>
</comment>
<comment type="pathway">
    <text>Protein modification; protein ubiquitination.</text>
</comment>
<comment type="domain">
    <text evidence="3">The BTB/POZ domain mediates the interaction with some component of ubiquitin ligase complexes.</text>
</comment>
<evidence type="ECO:0000250" key="1"/>
<evidence type="ECO:0000255" key="2">
    <source>
        <dbReference type="PROSITE-ProRule" id="PRU00037"/>
    </source>
</evidence>
<evidence type="ECO:0000269" key="3">
    <source>
    </source>
</evidence>
<accession>O22890</accession>
<protein>
    <recommendedName>
        <fullName>Putative BTB/POZ domain-containing protein At2g40450</fullName>
    </recommendedName>
</protein>
<reference key="1">
    <citation type="journal article" date="1999" name="Nature">
        <title>Sequence and analysis of chromosome 2 of the plant Arabidopsis thaliana.</title>
        <authorList>
            <person name="Lin X."/>
            <person name="Kaul S."/>
            <person name="Rounsley S.D."/>
            <person name="Shea T.P."/>
            <person name="Benito M.-I."/>
            <person name="Town C.D."/>
            <person name="Fujii C.Y."/>
            <person name="Mason T.M."/>
            <person name="Bowman C.L."/>
            <person name="Barnstead M.E."/>
            <person name="Feldblyum T.V."/>
            <person name="Buell C.R."/>
            <person name="Ketchum K.A."/>
            <person name="Lee J.J."/>
            <person name="Ronning C.M."/>
            <person name="Koo H.L."/>
            <person name="Moffat K.S."/>
            <person name="Cronin L.A."/>
            <person name="Shen M."/>
            <person name="Pai G."/>
            <person name="Van Aken S."/>
            <person name="Umayam L."/>
            <person name="Tallon L.J."/>
            <person name="Gill J.E."/>
            <person name="Adams M.D."/>
            <person name="Carrera A.J."/>
            <person name="Creasy T.H."/>
            <person name="Goodman H.M."/>
            <person name="Somerville C.R."/>
            <person name="Copenhaver G.P."/>
            <person name="Preuss D."/>
            <person name="Nierman W.C."/>
            <person name="White O."/>
            <person name="Eisen J.A."/>
            <person name="Salzberg S.L."/>
            <person name="Fraser C.M."/>
            <person name="Venter J.C."/>
        </authorList>
    </citation>
    <scope>NUCLEOTIDE SEQUENCE [LARGE SCALE GENOMIC DNA]</scope>
    <source>
        <strain>cv. Columbia</strain>
    </source>
</reference>
<reference key="2">
    <citation type="journal article" date="2017" name="Plant J.">
        <title>Araport11: a complete reannotation of the Arabidopsis thaliana reference genome.</title>
        <authorList>
            <person name="Cheng C.Y."/>
            <person name="Krishnakumar V."/>
            <person name="Chan A.P."/>
            <person name="Thibaud-Nissen F."/>
            <person name="Schobel S."/>
            <person name="Town C.D."/>
        </authorList>
    </citation>
    <scope>GENOME REANNOTATION</scope>
    <source>
        <strain>cv. Columbia</strain>
    </source>
</reference>
<reference key="3">
    <citation type="journal article" date="2005" name="J. Biol. Chem.">
        <title>Cullins 3a and 3b assemble with members of the broad complex/tramtrack/bric-a-brac (BTB) protein family to form essential ubiquitin-protein ligases (E3s) in Arabidopsis.</title>
        <authorList>
            <person name="Gingerich D.J."/>
            <person name="Gagne J.M."/>
            <person name="Salter D.W."/>
            <person name="Hellmann H."/>
            <person name="Estelle M."/>
            <person name="Ma L."/>
            <person name="Vierstra R.D."/>
        </authorList>
    </citation>
    <scope>DOMAIN BTB</scope>
</reference>